<comment type="function">
    <text evidence="1">Catalyzes the initial step of the lipid cycle reactions in the biosynthesis of the cell wall peptidoglycan: transfers peptidoglycan precursor phospho-MurNAc-pentapeptide from UDP-MurNAc-pentapeptide onto the lipid carrier undecaprenyl phosphate, yielding undecaprenyl-pyrophosphoryl-MurNAc-pentapeptide, known as lipid I.</text>
</comment>
<comment type="catalytic activity">
    <reaction evidence="1">
        <text>UDP-N-acetyl-alpha-D-muramoyl-L-alanyl-gamma-D-glutamyl-meso-2,6-diaminopimeloyl-D-alanyl-D-alanine + di-trans,octa-cis-undecaprenyl phosphate = di-trans,octa-cis-undecaprenyl diphospho-N-acetyl-alpha-D-muramoyl-L-alanyl-D-glutamyl-meso-2,6-diaminopimeloyl-D-alanyl-D-alanine + UMP</text>
        <dbReference type="Rhea" id="RHEA:28386"/>
        <dbReference type="ChEBI" id="CHEBI:57865"/>
        <dbReference type="ChEBI" id="CHEBI:60392"/>
        <dbReference type="ChEBI" id="CHEBI:61386"/>
        <dbReference type="ChEBI" id="CHEBI:61387"/>
        <dbReference type="EC" id="2.7.8.13"/>
    </reaction>
</comment>
<comment type="cofactor">
    <cofactor evidence="1">
        <name>Mg(2+)</name>
        <dbReference type="ChEBI" id="CHEBI:18420"/>
    </cofactor>
</comment>
<comment type="pathway">
    <text evidence="1">Cell wall biogenesis; peptidoglycan biosynthesis.</text>
</comment>
<comment type="subcellular location">
    <subcellularLocation>
        <location evidence="1">Cell inner membrane</location>
        <topology evidence="1">Multi-pass membrane protein</topology>
    </subcellularLocation>
</comment>
<comment type="similarity">
    <text evidence="1">Belongs to the glycosyltransferase 4 family. MraY subfamily.</text>
</comment>
<reference key="1">
    <citation type="submission" date="2006-08" db="EMBL/GenBank/DDBJ databases">
        <title>Complete sequence of Alkalilimnicola ehrilichei MLHE-1.</title>
        <authorList>
            <person name="Copeland A."/>
            <person name="Lucas S."/>
            <person name="Lapidus A."/>
            <person name="Barry K."/>
            <person name="Detter J.C."/>
            <person name="Glavina del Rio T."/>
            <person name="Hammon N."/>
            <person name="Israni S."/>
            <person name="Dalin E."/>
            <person name="Tice H."/>
            <person name="Pitluck S."/>
            <person name="Sims D."/>
            <person name="Brettin T."/>
            <person name="Bruce D."/>
            <person name="Han C."/>
            <person name="Tapia R."/>
            <person name="Gilna P."/>
            <person name="Schmutz J."/>
            <person name="Larimer F."/>
            <person name="Land M."/>
            <person name="Hauser L."/>
            <person name="Kyrpides N."/>
            <person name="Mikhailova N."/>
            <person name="Oremland R.S."/>
            <person name="Hoeft S.E."/>
            <person name="Switzer-Blum J."/>
            <person name="Kulp T."/>
            <person name="King G."/>
            <person name="Tabita R."/>
            <person name="Witte B."/>
            <person name="Santini J.M."/>
            <person name="Basu P."/>
            <person name="Hollibaugh J.T."/>
            <person name="Xie G."/>
            <person name="Stolz J.F."/>
            <person name="Richardson P."/>
        </authorList>
    </citation>
    <scope>NUCLEOTIDE SEQUENCE [LARGE SCALE GENOMIC DNA]</scope>
    <source>
        <strain>ATCC BAA-1101 / DSM 17681 / MLHE-1</strain>
    </source>
</reference>
<evidence type="ECO:0000255" key="1">
    <source>
        <dbReference type="HAMAP-Rule" id="MF_00038"/>
    </source>
</evidence>
<protein>
    <recommendedName>
        <fullName evidence="1">Phospho-N-acetylmuramoyl-pentapeptide-transferase</fullName>
        <ecNumber evidence="1">2.7.8.13</ecNumber>
    </recommendedName>
    <alternativeName>
        <fullName evidence="1">UDP-MurNAc-pentapeptide phosphotransferase</fullName>
    </alternativeName>
</protein>
<accession>Q0A6J9</accession>
<sequence length="360" mass="38469">MLYHLAMALEGVYSGFNVFQYLTFRTILGVLTALGIALLVGPAVIQRLVEHQIGQQVRDDGPQSHLSKAGTPTMGGALILVAIAVATLLWSDLTNRYVWVVLLTTLAFGVIGGVDDYRKLALGNSKGLSARAKFFWQTVVALMAAVFLFSTAQSPLETSLIVPLFKDVVLPLGLLFIPLVWLVVVGSSNAVNLTDGLDGLAILPSVLVAGGLAVFAYATGHAVFADYLGIPFVAGAGEVVVFCGALIGAGLGFLWFNTYPAQVFMGDVGALALGAALGILAVVVRQELVLLIMGGVFVVETLSVMLQVASYKLTGRRIFRMAPLHHHFELKGWPEPRVIVRFWIITVVLVLVGLAMLKVR</sequence>
<name>MRAY_ALKEH</name>
<gene>
    <name evidence="1" type="primary">mraY</name>
    <name type="ordered locus">Mlg_2196</name>
</gene>
<dbReference type="EC" id="2.7.8.13" evidence="1"/>
<dbReference type="EMBL" id="CP000453">
    <property type="protein sequence ID" value="ABI57538.1"/>
    <property type="molecule type" value="Genomic_DNA"/>
</dbReference>
<dbReference type="SMR" id="Q0A6J9"/>
<dbReference type="KEGG" id="aeh:Mlg_2196"/>
<dbReference type="eggNOG" id="COG0472">
    <property type="taxonomic scope" value="Bacteria"/>
</dbReference>
<dbReference type="HOGENOM" id="CLU_023982_0_0_6"/>
<dbReference type="UniPathway" id="UPA00219"/>
<dbReference type="Proteomes" id="UP000001962">
    <property type="component" value="Chromosome"/>
</dbReference>
<dbReference type="GO" id="GO:0005886">
    <property type="term" value="C:plasma membrane"/>
    <property type="evidence" value="ECO:0007669"/>
    <property type="project" value="UniProtKB-SubCell"/>
</dbReference>
<dbReference type="GO" id="GO:0046872">
    <property type="term" value="F:metal ion binding"/>
    <property type="evidence" value="ECO:0007669"/>
    <property type="project" value="UniProtKB-KW"/>
</dbReference>
<dbReference type="GO" id="GO:0008963">
    <property type="term" value="F:phospho-N-acetylmuramoyl-pentapeptide-transferase activity"/>
    <property type="evidence" value="ECO:0007669"/>
    <property type="project" value="UniProtKB-UniRule"/>
</dbReference>
<dbReference type="GO" id="GO:0051992">
    <property type="term" value="F:UDP-N-acetylmuramoyl-L-alanyl-D-glutamyl-meso-2,6-diaminopimelyl-D-alanyl-D-alanine:undecaprenyl-phosphate transferase activity"/>
    <property type="evidence" value="ECO:0007669"/>
    <property type="project" value="RHEA"/>
</dbReference>
<dbReference type="GO" id="GO:0051301">
    <property type="term" value="P:cell division"/>
    <property type="evidence" value="ECO:0007669"/>
    <property type="project" value="UniProtKB-KW"/>
</dbReference>
<dbReference type="GO" id="GO:0071555">
    <property type="term" value="P:cell wall organization"/>
    <property type="evidence" value="ECO:0007669"/>
    <property type="project" value="UniProtKB-KW"/>
</dbReference>
<dbReference type="GO" id="GO:0009252">
    <property type="term" value="P:peptidoglycan biosynthetic process"/>
    <property type="evidence" value="ECO:0007669"/>
    <property type="project" value="UniProtKB-UniRule"/>
</dbReference>
<dbReference type="GO" id="GO:0008360">
    <property type="term" value="P:regulation of cell shape"/>
    <property type="evidence" value="ECO:0007669"/>
    <property type="project" value="UniProtKB-KW"/>
</dbReference>
<dbReference type="CDD" id="cd06852">
    <property type="entry name" value="GT_MraY"/>
    <property type="match status" value="1"/>
</dbReference>
<dbReference type="HAMAP" id="MF_00038">
    <property type="entry name" value="MraY"/>
    <property type="match status" value="1"/>
</dbReference>
<dbReference type="InterPro" id="IPR000715">
    <property type="entry name" value="Glycosyl_transferase_4"/>
</dbReference>
<dbReference type="InterPro" id="IPR003524">
    <property type="entry name" value="PNAcMuramoyl-5peptid_Trfase"/>
</dbReference>
<dbReference type="InterPro" id="IPR018480">
    <property type="entry name" value="PNAcMuramoyl-5peptid_Trfase_CS"/>
</dbReference>
<dbReference type="NCBIfam" id="TIGR00445">
    <property type="entry name" value="mraY"/>
    <property type="match status" value="1"/>
</dbReference>
<dbReference type="PANTHER" id="PTHR22926">
    <property type="entry name" value="PHOSPHO-N-ACETYLMURAMOYL-PENTAPEPTIDE-TRANSFERASE"/>
    <property type="match status" value="1"/>
</dbReference>
<dbReference type="PANTHER" id="PTHR22926:SF5">
    <property type="entry name" value="PHOSPHO-N-ACETYLMURAMOYL-PENTAPEPTIDE-TRANSFERASE HOMOLOG"/>
    <property type="match status" value="1"/>
</dbReference>
<dbReference type="Pfam" id="PF00953">
    <property type="entry name" value="Glycos_transf_4"/>
    <property type="match status" value="1"/>
</dbReference>
<dbReference type="Pfam" id="PF10555">
    <property type="entry name" value="MraY_sig1"/>
    <property type="match status" value="1"/>
</dbReference>
<dbReference type="PROSITE" id="PS01347">
    <property type="entry name" value="MRAY_1"/>
    <property type="match status" value="1"/>
</dbReference>
<dbReference type="PROSITE" id="PS01348">
    <property type="entry name" value="MRAY_2"/>
    <property type="match status" value="1"/>
</dbReference>
<keyword id="KW-0131">Cell cycle</keyword>
<keyword id="KW-0132">Cell division</keyword>
<keyword id="KW-0997">Cell inner membrane</keyword>
<keyword id="KW-1003">Cell membrane</keyword>
<keyword id="KW-0133">Cell shape</keyword>
<keyword id="KW-0961">Cell wall biogenesis/degradation</keyword>
<keyword id="KW-0460">Magnesium</keyword>
<keyword id="KW-0472">Membrane</keyword>
<keyword id="KW-0479">Metal-binding</keyword>
<keyword id="KW-0573">Peptidoglycan synthesis</keyword>
<keyword id="KW-1185">Reference proteome</keyword>
<keyword id="KW-0808">Transferase</keyword>
<keyword id="KW-0812">Transmembrane</keyword>
<keyword id="KW-1133">Transmembrane helix</keyword>
<proteinExistence type="inferred from homology"/>
<organism>
    <name type="scientific">Alkalilimnicola ehrlichii (strain ATCC BAA-1101 / DSM 17681 / MLHE-1)</name>
    <dbReference type="NCBI Taxonomy" id="187272"/>
    <lineage>
        <taxon>Bacteria</taxon>
        <taxon>Pseudomonadati</taxon>
        <taxon>Pseudomonadota</taxon>
        <taxon>Gammaproteobacteria</taxon>
        <taxon>Chromatiales</taxon>
        <taxon>Ectothiorhodospiraceae</taxon>
        <taxon>Alkalilimnicola</taxon>
    </lineage>
</organism>
<feature type="chain" id="PRO_1000002932" description="Phospho-N-acetylmuramoyl-pentapeptide-transferase">
    <location>
        <begin position="1"/>
        <end position="360"/>
    </location>
</feature>
<feature type="transmembrane region" description="Helical" evidence="1">
    <location>
        <begin position="26"/>
        <end position="46"/>
    </location>
</feature>
<feature type="transmembrane region" description="Helical" evidence="1">
    <location>
        <begin position="70"/>
        <end position="90"/>
    </location>
</feature>
<feature type="transmembrane region" description="Helical" evidence="1">
    <location>
        <begin position="97"/>
        <end position="117"/>
    </location>
</feature>
<feature type="transmembrane region" description="Helical" evidence="1">
    <location>
        <begin position="132"/>
        <end position="152"/>
    </location>
</feature>
<feature type="transmembrane region" description="Helical" evidence="1">
    <location>
        <begin position="168"/>
        <end position="188"/>
    </location>
</feature>
<feature type="transmembrane region" description="Helical" evidence="1">
    <location>
        <begin position="199"/>
        <end position="219"/>
    </location>
</feature>
<feature type="transmembrane region" description="Helical" evidence="1">
    <location>
        <begin position="236"/>
        <end position="256"/>
    </location>
</feature>
<feature type="transmembrane region" description="Helical" evidence="1">
    <location>
        <begin position="263"/>
        <end position="283"/>
    </location>
</feature>
<feature type="transmembrane region" description="Helical" evidence="1">
    <location>
        <begin position="288"/>
        <end position="308"/>
    </location>
</feature>
<feature type="transmembrane region" description="Helical" evidence="1">
    <location>
        <begin position="338"/>
        <end position="358"/>
    </location>
</feature>